<name>FLGI_CUPPJ</name>
<gene>
    <name evidence="1" type="primary">flgI</name>
    <name type="ordered locus">Reut_B5632</name>
</gene>
<reference key="1">
    <citation type="journal article" date="2010" name="PLoS ONE">
        <title>The complete multipartite genome sequence of Cupriavidus necator JMP134, a versatile pollutant degrader.</title>
        <authorList>
            <person name="Lykidis A."/>
            <person name="Perez-Pantoja D."/>
            <person name="Ledger T."/>
            <person name="Mavromatis K."/>
            <person name="Anderson I.J."/>
            <person name="Ivanova N.N."/>
            <person name="Hooper S.D."/>
            <person name="Lapidus A."/>
            <person name="Lucas S."/>
            <person name="Gonzalez B."/>
            <person name="Kyrpides N.C."/>
        </authorList>
    </citation>
    <scope>NUCLEOTIDE SEQUENCE [LARGE SCALE GENOMIC DNA]</scope>
    <source>
        <strain>JMP134 / LMG 1197</strain>
    </source>
</reference>
<accession>Q46PF7</accession>
<evidence type="ECO:0000255" key="1">
    <source>
        <dbReference type="HAMAP-Rule" id="MF_00416"/>
    </source>
</evidence>
<evidence type="ECO:0000305" key="2"/>
<comment type="function">
    <text evidence="1">Assembles around the rod to form the L-ring and probably protects the motor/basal body from shearing forces during rotation.</text>
</comment>
<comment type="subunit">
    <text evidence="1">The basal body constitutes a major portion of the flagellar organelle and consists of four rings (L,P,S, and M) mounted on a central rod.</text>
</comment>
<comment type="subcellular location">
    <subcellularLocation>
        <location evidence="1">Periplasm</location>
    </subcellularLocation>
    <subcellularLocation>
        <location evidence="1">Bacterial flagellum basal body</location>
    </subcellularLocation>
</comment>
<comment type="similarity">
    <text evidence="1">Belongs to the FlgI family.</text>
</comment>
<comment type="sequence caution" evidence="2">
    <conflict type="erroneous initiation">
        <sequence resource="EMBL-CDS" id="AAZ64977"/>
    </conflict>
</comment>
<organism>
    <name type="scientific">Cupriavidus pinatubonensis (strain JMP 134 / LMG 1197)</name>
    <name type="common">Cupriavidus necator (strain JMP 134)</name>
    <dbReference type="NCBI Taxonomy" id="264198"/>
    <lineage>
        <taxon>Bacteria</taxon>
        <taxon>Pseudomonadati</taxon>
        <taxon>Pseudomonadota</taxon>
        <taxon>Betaproteobacteria</taxon>
        <taxon>Burkholderiales</taxon>
        <taxon>Burkholderiaceae</taxon>
        <taxon>Cupriavidus</taxon>
    </lineage>
</organism>
<feature type="signal peptide" evidence="1">
    <location>
        <begin position="1"/>
        <end position="30"/>
    </location>
</feature>
<feature type="chain" id="PRO_0000236314" description="Flagellar P-ring protein">
    <location>
        <begin position="31"/>
        <end position="377"/>
    </location>
</feature>
<protein>
    <recommendedName>
        <fullName evidence="1">Flagellar P-ring protein</fullName>
    </recommendedName>
    <alternativeName>
        <fullName evidence="1">Basal body P-ring protein</fullName>
    </alternativeName>
</protein>
<proteinExistence type="inferred from homology"/>
<keyword id="KW-0975">Bacterial flagellum</keyword>
<keyword id="KW-0574">Periplasm</keyword>
<keyword id="KW-0732">Signal</keyword>
<dbReference type="EMBL" id="CP000091">
    <property type="protein sequence ID" value="AAZ64977.1"/>
    <property type="status" value="ALT_INIT"/>
    <property type="molecule type" value="Genomic_DNA"/>
</dbReference>
<dbReference type="SMR" id="Q46PF7"/>
<dbReference type="STRING" id="264198.Reut_B5632"/>
<dbReference type="KEGG" id="reu:Reut_B5632"/>
<dbReference type="eggNOG" id="COG1706">
    <property type="taxonomic scope" value="Bacteria"/>
</dbReference>
<dbReference type="HOGENOM" id="CLU_045235_1_0_4"/>
<dbReference type="GO" id="GO:0009428">
    <property type="term" value="C:bacterial-type flagellum basal body, distal rod, P ring"/>
    <property type="evidence" value="ECO:0007669"/>
    <property type="project" value="InterPro"/>
</dbReference>
<dbReference type="GO" id="GO:0030288">
    <property type="term" value="C:outer membrane-bounded periplasmic space"/>
    <property type="evidence" value="ECO:0007669"/>
    <property type="project" value="InterPro"/>
</dbReference>
<dbReference type="GO" id="GO:0005198">
    <property type="term" value="F:structural molecule activity"/>
    <property type="evidence" value="ECO:0007669"/>
    <property type="project" value="InterPro"/>
</dbReference>
<dbReference type="GO" id="GO:0071973">
    <property type="term" value="P:bacterial-type flagellum-dependent cell motility"/>
    <property type="evidence" value="ECO:0007669"/>
    <property type="project" value="InterPro"/>
</dbReference>
<dbReference type="HAMAP" id="MF_00416">
    <property type="entry name" value="FlgI"/>
    <property type="match status" value="1"/>
</dbReference>
<dbReference type="InterPro" id="IPR001782">
    <property type="entry name" value="Flag_FlgI"/>
</dbReference>
<dbReference type="NCBIfam" id="NF003676">
    <property type="entry name" value="PRK05303.1"/>
    <property type="match status" value="1"/>
</dbReference>
<dbReference type="PANTHER" id="PTHR30381">
    <property type="entry name" value="FLAGELLAR P-RING PERIPLASMIC PROTEIN FLGI"/>
    <property type="match status" value="1"/>
</dbReference>
<dbReference type="PANTHER" id="PTHR30381:SF0">
    <property type="entry name" value="FLAGELLAR P-RING PROTEIN"/>
    <property type="match status" value="1"/>
</dbReference>
<dbReference type="Pfam" id="PF02119">
    <property type="entry name" value="FlgI"/>
    <property type="match status" value="1"/>
</dbReference>
<dbReference type="PRINTS" id="PR01010">
    <property type="entry name" value="FLGPRINGFLGI"/>
</dbReference>
<sequence>MLARFLSSLLKASVTALAVVVAFGFAANFARAERLKNLATFQGVRDNPLVGYGLVVGLDNTGDQTMQTPFTTQSLTNMLSQLGITLPAGKNMQLKNVAAVMVTATLPAFAQPGSQLDIVVSSMGNAKSLRGGTLLMTPLKGADGQVYAIAQGNMLVGGAGASANGSKVQVNQLAVGRIANGAIVERAVAAFQPDGGVLNLELKDTDFGTAERVVEAINRSMGGGVAAALDGRVVQVRAPQSPSARVGFLARIENLDVTPAKAAAKVILNARTGSIVMNQAVTVEDCAVAHGNLSVVINTQPVISQPAPFSGGQTVVAPVSQIDMKQQGGSLQIVKAGASLAAVVKGLNALGATPADLQTILEAMRAAGALRAELEII</sequence>